<protein>
    <recommendedName>
        <fullName>Protein TPX2</fullName>
        <shortName>AtTPX2</shortName>
    </recommendedName>
    <alternativeName>
        <fullName>Targeting protein for XKLP2</fullName>
    </alternativeName>
</protein>
<proteinExistence type="evidence at protein level"/>
<gene>
    <name type="primary">TPX2</name>
    <name type="ordered locus">At1g03780</name>
    <name type="ORF">F11M21.29</name>
</gene>
<accession>F4I2H7</accession>
<accession>F4I2H9</accession>
<accession>Q3EDJ2</accession>
<accession>Q56XS5</accession>
<accession>Q9ZWA0</accession>
<dbReference type="EMBL" id="AC003027">
    <property type="protein sequence ID" value="AAD10690.1"/>
    <property type="status" value="ALT_SEQ"/>
    <property type="molecule type" value="Genomic_DNA"/>
</dbReference>
<dbReference type="EMBL" id="CP002684">
    <property type="protein sequence ID" value="AEE27611.1"/>
    <property type="molecule type" value="Genomic_DNA"/>
</dbReference>
<dbReference type="EMBL" id="CP002684">
    <property type="protein sequence ID" value="AEE27612.1"/>
    <property type="molecule type" value="Genomic_DNA"/>
</dbReference>
<dbReference type="EMBL" id="CP002684">
    <property type="protein sequence ID" value="AEE27613.1"/>
    <property type="molecule type" value="Genomic_DNA"/>
</dbReference>
<dbReference type="EMBL" id="AK221598">
    <property type="protein sequence ID" value="BAD95139.1"/>
    <property type="molecule type" value="mRNA"/>
</dbReference>
<dbReference type="PIR" id="C86168">
    <property type="entry name" value="C86168"/>
</dbReference>
<dbReference type="RefSeq" id="NP_001184902.1">
    <molecule id="F4I2H7-1"/>
    <property type="nucleotide sequence ID" value="NM_001197973.1"/>
</dbReference>
<dbReference type="RefSeq" id="NP_171874.3">
    <molecule id="F4I2H7-3"/>
    <property type="nucleotide sequence ID" value="NM_100257.3"/>
</dbReference>
<dbReference type="RefSeq" id="NP_973754.2">
    <molecule id="F4I2H7-2"/>
    <property type="nucleotide sequence ID" value="NM_202025.3"/>
</dbReference>
<dbReference type="SMR" id="F4I2H7"/>
<dbReference type="BioGRID" id="24377">
    <property type="interactions" value="1"/>
</dbReference>
<dbReference type="FunCoup" id="F4I2H7">
    <property type="interactions" value="496"/>
</dbReference>
<dbReference type="STRING" id="3702.F4I2H7"/>
<dbReference type="PaxDb" id="3702-AT1G03780.3"/>
<dbReference type="ProteomicsDB" id="232506">
    <molecule id="F4I2H7-1"/>
</dbReference>
<dbReference type="EnsemblPlants" id="AT1G03780.1">
    <molecule id="F4I2H7-3"/>
    <property type="protein sequence ID" value="AT1G03780.1"/>
    <property type="gene ID" value="AT1G03780"/>
</dbReference>
<dbReference type="EnsemblPlants" id="AT1G03780.2">
    <molecule id="F4I2H7-2"/>
    <property type="protein sequence ID" value="AT1G03780.2"/>
    <property type="gene ID" value="AT1G03780"/>
</dbReference>
<dbReference type="EnsemblPlants" id="AT1G03780.3">
    <molecule id="F4I2H7-1"/>
    <property type="protein sequence ID" value="AT1G03780.3"/>
    <property type="gene ID" value="AT1G03780"/>
</dbReference>
<dbReference type="GeneID" id="839140"/>
<dbReference type="Gramene" id="AT1G03780.1">
    <molecule id="F4I2H7-3"/>
    <property type="protein sequence ID" value="AT1G03780.1"/>
    <property type="gene ID" value="AT1G03780"/>
</dbReference>
<dbReference type="Gramene" id="AT1G03780.2">
    <molecule id="F4I2H7-2"/>
    <property type="protein sequence ID" value="AT1G03780.2"/>
    <property type="gene ID" value="AT1G03780"/>
</dbReference>
<dbReference type="Gramene" id="AT1G03780.3">
    <molecule id="F4I2H7-1"/>
    <property type="protein sequence ID" value="AT1G03780.3"/>
    <property type="gene ID" value="AT1G03780"/>
</dbReference>
<dbReference type="KEGG" id="ath:AT1G03780"/>
<dbReference type="Araport" id="AT1G03780"/>
<dbReference type="TAIR" id="AT1G03780">
    <property type="gene designation" value="TPX2"/>
</dbReference>
<dbReference type="eggNOG" id="ENOG502QVQS">
    <property type="taxonomic scope" value="Eukaryota"/>
</dbReference>
<dbReference type="InParanoid" id="F4I2H7"/>
<dbReference type="OMA" id="GRHTVSC"/>
<dbReference type="OrthoDB" id="1684416at2759"/>
<dbReference type="CD-CODE" id="33FCD62D">
    <property type="entry name" value="Centrosome"/>
</dbReference>
<dbReference type="PRO" id="PR:F4I2H7"/>
<dbReference type="Proteomes" id="UP000006548">
    <property type="component" value="Chromosome 1"/>
</dbReference>
<dbReference type="ExpressionAtlas" id="F4I2H7">
    <property type="expression patterns" value="baseline and differential"/>
</dbReference>
<dbReference type="GO" id="GO:0009941">
    <property type="term" value="C:chloroplast envelope"/>
    <property type="evidence" value="ECO:0007005"/>
    <property type="project" value="TAIR"/>
</dbReference>
<dbReference type="GO" id="GO:0005874">
    <property type="term" value="C:microtubule"/>
    <property type="evidence" value="ECO:0000314"/>
    <property type="project" value="TAIR"/>
</dbReference>
<dbReference type="GO" id="GO:0005654">
    <property type="term" value="C:nucleoplasm"/>
    <property type="evidence" value="ECO:0000315"/>
    <property type="project" value="UniProtKB"/>
</dbReference>
<dbReference type="GO" id="GO:0005634">
    <property type="term" value="C:nucleus"/>
    <property type="evidence" value="ECO:0000314"/>
    <property type="project" value="TAIR"/>
</dbReference>
<dbReference type="GO" id="GO:0009524">
    <property type="term" value="C:phragmoplast"/>
    <property type="evidence" value="ECO:0000315"/>
    <property type="project" value="UniProtKB"/>
</dbReference>
<dbReference type="GO" id="GO:0005819">
    <property type="term" value="C:spindle"/>
    <property type="evidence" value="ECO:0000315"/>
    <property type="project" value="UniProtKB"/>
</dbReference>
<dbReference type="GO" id="GO:0008017">
    <property type="term" value="F:microtubule binding"/>
    <property type="evidence" value="ECO:0000314"/>
    <property type="project" value="TAIR"/>
</dbReference>
<dbReference type="GO" id="GO:0051301">
    <property type="term" value="P:cell division"/>
    <property type="evidence" value="ECO:0007669"/>
    <property type="project" value="UniProtKB-KW"/>
</dbReference>
<dbReference type="GO" id="GO:0000278">
    <property type="term" value="P:mitotic cell cycle"/>
    <property type="evidence" value="ECO:0000315"/>
    <property type="project" value="UniProtKB"/>
</dbReference>
<dbReference type="GO" id="GO:0090307">
    <property type="term" value="P:mitotic spindle assembly"/>
    <property type="evidence" value="ECO:0000315"/>
    <property type="project" value="UniProtKB"/>
</dbReference>
<dbReference type="GO" id="GO:0060236">
    <property type="term" value="P:regulation of mitotic spindle organization"/>
    <property type="evidence" value="ECO:0000315"/>
    <property type="project" value="UniProtKB"/>
</dbReference>
<dbReference type="GO" id="GO:0051225">
    <property type="term" value="P:spindle assembly"/>
    <property type="evidence" value="ECO:0000315"/>
    <property type="project" value="TAIR"/>
</dbReference>
<dbReference type="InterPro" id="IPR027329">
    <property type="entry name" value="TPX2_C"/>
</dbReference>
<dbReference type="InterPro" id="IPR027330">
    <property type="entry name" value="TPX2_central_dom"/>
</dbReference>
<dbReference type="InterPro" id="IPR009675">
    <property type="entry name" value="TPX2_fam"/>
</dbReference>
<dbReference type="PANTHER" id="PTHR14326">
    <property type="entry name" value="TARGETING PROTEIN FOR XKLP2"/>
    <property type="match status" value="1"/>
</dbReference>
<dbReference type="PANTHER" id="PTHR14326:SF44">
    <property type="entry name" value="TARGETING PROTEIN FOR XKLP2"/>
    <property type="match status" value="1"/>
</dbReference>
<dbReference type="Pfam" id="PF06886">
    <property type="entry name" value="TPX2"/>
    <property type="match status" value="1"/>
</dbReference>
<dbReference type="Pfam" id="PF12214">
    <property type="entry name" value="TPX2_importin"/>
    <property type="match status" value="3"/>
</dbReference>
<sequence>MEATAEESVSTLVTTMVDETYEFLAPRWFDFVNGETEDESRRAELWFQSALSCAPSPSVPRIKARRSFKVEAMCNFNEAEEETLKDKEPLEPVVPIVSLQSQPSQAKKAEVAPSKASTVKPSRISSKDAEVNNKTVDASDPTTEPIEDKENIAPACTPKPPMQFSLGAKSVDLKKQQTARKIASLLKNPSTLRPKNQSQAKGSHQKSVKGETNLNNIASTTNLIQENQAIKRQKLDDGKSRQILNPKPATLLHKTRNGLVNTGFNLCPSVTKHTPKENRKVYVREQIAPFVSTAELMKKFQTSTRDLFVQNRPKLTLTRPKEPEFVTSQRARPLRVKSSAELEEEMLAKIPKFKARPVNKKILAAPALPAPQRSTPHLPEFQEFHLQTMARANQHAETSSIASTEVSKQHNDQKHHLTEPKSPVLQTMLRARPTIAKTTAELEQEELEKAPKFKAKPLNKKIFESKGEMGIFCNTKKHITIPQEFHFATDERISRPESVLDIFDKLSLNSESCHEKPLPRNTAPNPFNLKTEERGAEKEKKFYMELMYKKLGDVKARVPKANPYPYTTDYPVVPPKPEPKQCTQPEPFQLESLVRHEEEMRREREERRRMETEEAQKRLFKAQPVIKEDPIPVPEKVRMPLTEIQEFNLHVEHRAVERADFDHKIKEKENQYKRYREESEAAKMVEEERALKQMRKTMVPHARPVPNFNKPFLPQKSNKGTTKAKSPNLRVIKRTERRTMMARPTISAATSASAVHCLMYPGSSFNKLKKKTVLTNIVHCLMYPDSSLLN</sequence>
<feature type="chain" id="PRO_0000420703" description="Protein TPX2">
    <location>
        <begin position="1"/>
        <end position="790"/>
    </location>
</feature>
<feature type="region of interest" description="Disordered" evidence="2">
    <location>
        <begin position="101"/>
        <end position="160"/>
    </location>
</feature>
<feature type="region of interest" description="Disordered" evidence="2">
    <location>
        <begin position="188"/>
        <end position="211"/>
    </location>
</feature>
<feature type="region of interest" description="Disordered" evidence="2">
    <location>
        <begin position="394"/>
        <end position="417"/>
    </location>
</feature>
<feature type="region of interest" description="Disordered" evidence="2">
    <location>
        <begin position="701"/>
        <end position="727"/>
    </location>
</feature>
<feature type="coiled-coil region" evidence="1">
    <location>
        <begin position="588"/>
        <end position="619"/>
    </location>
</feature>
<feature type="coiled-coil region" evidence="1">
    <location>
        <begin position="656"/>
        <end position="698"/>
    </location>
</feature>
<feature type="compositionally biased region" description="Polar residues" evidence="2">
    <location>
        <begin position="115"/>
        <end position="124"/>
    </location>
</feature>
<feature type="compositionally biased region" description="Polar residues" evidence="2">
    <location>
        <begin position="132"/>
        <end position="142"/>
    </location>
</feature>
<feature type="compositionally biased region" description="Polar residues" evidence="2">
    <location>
        <begin position="188"/>
        <end position="202"/>
    </location>
</feature>
<feature type="compositionally biased region" description="Polar residues" evidence="2">
    <location>
        <begin position="395"/>
        <end position="406"/>
    </location>
</feature>
<feature type="compositionally biased region" description="Basic and acidic residues" evidence="2">
    <location>
        <begin position="407"/>
        <end position="417"/>
    </location>
</feature>
<feature type="compositionally biased region" description="Polar residues" evidence="2">
    <location>
        <begin position="715"/>
        <end position="725"/>
    </location>
</feature>
<feature type="splice variant" id="VSP_044609" description="In isoform 3." evidence="7">
    <location>
        <begin position="362"/>
        <end position="382"/>
    </location>
</feature>
<feature type="splice variant" id="VSP_044610" description="In isoform 3." evidence="7">
    <location>
        <begin position="506"/>
        <end position="532"/>
    </location>
</feature>
<feature type="splice variant" id="VSP_044611" description="In isoform 3." evidence="7">
    <original>V</original>
    <variation>VKREMVLINLTCSNSQ</variation>
    <location>
        <position position="572"/>
    </location>
</feature>
<feature type="splice variant" id="VSP_044612" description="In isoform 3." evidence="7">
    <original>K</original>
    <variation>KVSILFSHFSKQKNASITSEIDESILFWNQ</variation>
    <location>
        <position position="664"/>
    </location>
</feature>
<feature type="splice variant" id="VSP_044613" description="In isoform 3." evidence="7">
    <original>EEERAL</original>
    <variation>CNISNA</variation>
    <location>
        <begin position="686"/>
        <end position="691"/>
    </location>
</feature>
<feature type="splice variant" id="VSP_044614" description="In isoform 3." evidence="7">
    <location>
        <begin position="692"/>
        <end position="790"/>
    </location>
</feature>
<feature type="splice variant" id="VSP_044615" description="In isoform 2." evidence="6">
    <original>VHCL</original>
    <variation>GQMR</variation>
    <location>
        <begin position="755"/>
        <end position="758"/>
    </location>
</feature>
<feature type="splice variant" id="VSP_044616" description="In isoform 2." evidence="6">
    <location>
        <begin position="759"/>
        <end position="790"/>
    </location>
</feature>
<feature type="mutagenesis site" description="Loss of nuclear targeting." evidence="3">
    <original>KR</original>
    <variation>NG</variation>
    <location>
        <begin position="231"/>
        <end position="232"/>
    </location>
</feature>
<feature type="mutagenesis site" description="Loss of export from the nucleus; when associated with H-506." evidence="3">
    <original>L</original>
    <variation>S</variation>
    <location>
        <position position="500"/>
    </location>
</feature>
<feature type="mutagenesis site" description="Loss of export from the nucleus; when associated with S-500." evidence="3">
    <original>L</original>
    <variation>H</variation>
    <location>
        <position position="506"/>
    </location>
</feature>
<feature type="mutagenesis site" description="Loss of nuclear targeting." evidence="3">
    <original>KR</original>
    <variation>NG</variation>
    <location>
        <begin position="673"/>
        <end position="674"/>
    </location>
</feature>
<feature type="mutagenesis site" description="No effect on nuclear targeting." evidence="3">
    <original>KR</original>
    <variation>NG</variation>
    <location>
        <begin position="733"/>
        <end position="734"/>
    </location>
</feature>
<name>TPX2_ARATH</name>
<keyword id="KW-0025">Alternative splicing</keyword>
<keyword id="KW-0131">Cell cycle</keyword>
<keyword id="KW-0132">Cell division</keyword>
<keyword id="KW-0175">Coiled coil</keyword>
<keyword id="KW-0963">Cytoplasm</keyword>
<keyword id="KW-0206">Cytoskeleton</keyword>
<keyword id="KW-0493">Microtubule</keyword>
<keyword id="KW-0498">Mitosis</keyword>
<keyword id="KW-0539">Nucleus</keyword>
<keyword id="KW-1185">Reference proteome</keyword>
<evidence type="ECO:0000255" key="1"/>
<evidence type="ECO:0000256" key="2">
    <source>
        <dbReference type="SAM" id="MobiDB-lite"/>
    </source>
</evidence>
<evidence type="ECO:0000269" key="3">
    <source>
    </source>
</evidence>
<evidence type="ECO:0000269" key="4">
    <source>
    </source>
</evidence>
<evidence type="ECO:0000269" key="5">
    <source>
    </source>
</evidence>
<evidence type="ECO:0000303" key="6">
    <source ref="3"/>
</evidence>
<evidence type="ECO:0000305" key="7"/>
<organism>
    <name type="scientific">Arabidopsis thaliana</name>
    <name type="common">Mouse-ear cress</name>
    <dbReference type="NCBI Taxonomy" id="3702"/>
    <lineage>
        <taxon>Eukaryota</taxon>
        <taxon>Viridiplantae</taxon>
        <taxon>Streptophyta</taxon>
        <taxon>Embryophyta</taxon>
        <taxon>Tracheophyta</taxon>
        <taxon>Spermatophyta</taxon>
        <taxon>Magnoliopsida</taxon>
        <taxon>eudicotyledons</taxon>
        <taxon>Gunneridae</taxon>
        <taxon>Pentapetalae</taxon>
        <taxon>rosids</taxon>
        <taxon>malvids</taxon>
        <taxon>Brassicales</taxon>
        <taxon>Brassicaceae</taxon>
        <taxon>Camelineae</taxon>
        <taxon>Arabidopsis</taxon>
    </lineage>
</organism>
<reference key="1">
    <citation type="journal article" date="2000" name="Nature">
        <title>Sequence and analysis of chromosome 1 of the plant Arabidopsis thaliana.</title>
        <authorList>
            <person name="Theologis A."/>
            <person name="Ecker J.R."/>
            <person name="Palm C.J."/>
            <person name="Federspiel N.A."/>
            <person name="Kaul S."/>
            <person name="White O."/>
            <person name="Alonso J."/>
            <person name="Altafi H."/>
            <person name="Araujo R."/>
            <person name="Bowman C.L."/>
            <person name="Brooks S.Y."/>
            <person name="Buehler E."/>
            <person name="Chan A."/>
            <person name="Chao Q."/>
            <person name="Chen H."/>
            <person name="Cheuk R.F."/>
            <person name="Chin C.W."/>
            <person name="Chung M.K."/>
            <person name="Conn L."/>
            <person name="Conway A.B."/>
            <person name="Conway A.R."/>
            <person name="Creasy T.H."/>
            <person name="Dewar K."/>
            <person name="Dunn P."/>
            <person name="Etgu P."/>
            <person name="Feldblyum T.V."/>
            <person name="Feng J.-D."/>
            <person name="Fong B."/>
            <person name="Fujii C.Y."/>
            <person name="Gill J.E."/>
            <person name="Goldsmith A.D."/>
            <person name="Haas B."/>
            <person name="Hansen N.F."/>
            <person name="Hughes B."/>
            <person name="Huizar L."/>
            <person name="Hunter J.L."/>
            <person name="Jenkins J."/>
            <person name="Johnson-Hopson C."/>
            <person name="Khan S."/>
            <person name="Khaykin E."/>
            <person name="Kim C.J."/>
            <person name="Koo H.L."/>
            <person name="Kremenetskaia I."/>
            <person name="Kurtz D.B."/>
            <person name="Kwan A."/>
            <person name="Lam B."/>
            <person name="Langin-Hooper S."/>
            <person name="Lee A."/>
            <person name="Lee J.M."/>
            <person name="Lenz C.A."/>
            <person name="Li J.H."/>
            <person name="Li Y.-P."/>
            <person name="Lin X."/>
            <person name="Liu S.X."/>
            <person name="Liu Z.A."/>
            <person name="Luros J.S."/>
            <person name="Maiti R."/>
            <person name="Marziali A."/>
            <person name="Militscher J."/>
            <person name="Miranda M."/>
            <person name="Nguyen M."/>
            <person name="Nierman W.C."/>
            <person name="Osborne B.I."/>
            <person name="Pai G."/>
            <person name="Peterson J."/>
            <person name="Pham P.K."/>
            <person name="Rizzo M."/>
            <person name="Rooney T."/>
            <person name="Rowley D."/>
            <person name="Sakano H."/>
            <person name="Salzberg S.L."/>
            <person name="Schwartz J.R."/>
            <person name="Shinn P."/>
            <person name="Southwick A.M."/>
            <person name="Sun H."/>
            <person name="Tallon L.J."/>
            <person name="Tambunga G."/>
            <person name="Toriumi M.J."/>
            <person name="Town C.D."/>
            <person name="Utterback T."/>
            <person name="Van Aken S."/>
            <person name="Vaysberg M."/>
            <person name="Vysotskaia V.S."/>
            <person name="Walker M."/>
            <person name="Wu D."/>
            <person name="Yu G."/>
            <person name="Fraser C.M."/>
            <person name="Venter J.C."/>
            <person name="Davis R.W."/>
        </authorList>
    </citation>
    <scope>NUCLEOTIDE SEQUENCE [LARGE SCALE GENOMIC DNA]</scope>
    <source>
        <strain>cv. Columbia</strain>
    </source>
</reference>
<reference key="2">
    <citation type="journal article" date="2017" name="Plant J.">
        <title>Araport11: a complete reannotation of the Arabidopsis thaliana reference genome.</title>
        <authorList>
            <person name="Cheng C.Y."/>
            <person name="Krishnakumar V."/>
            <person name="Chan A.P."/>
            <person name="Thibaud-Nissen F."/>
            <person name="Schobel S."/>
            <person name="Town C.D."/>
        </authorList>
    </citation>
    <scope>GENOME REANNOTATION</scope>
    <source>
        <strain>cv. Columbia</strain>
    </source>
</reference>
<reference key="3">
    <citation type="submission" date="2005-03" db="EMBL/GenBank/DDBJ databases">
        <title>Large-scale analysis of RIKEN Arabidopsis full-length (RAFL) cDNAs.</title>
        <authorList>
            <person name="Totoki Y."/>
            <person name="Seki M."/>
            <person name="Ishida J."/>
            <person name="Nakajima M."/>
            <person name="Enju A."/>
            <person name="Kamiya A."/>
            <person name="Narusaka M."/>
            <person name="Shin-i T."/>
            <person name="Nakagawa M."/>
            <person name="Sakamoto N."/>
            <person name="Oishi K."/>
            <person name="Kohara Y."/>
            <person name="Kobayashi M."/>
            <person name="Toyoda A."/>
            <person name="Sakaki Y."/>
            <person name="Sakurai T."/>
            <person name="Iida K."/>
            <person name="Akiyama K."/>
            <person name="Satou M."/>
            <person name="Toyoda T."/>
            <person name="Konagaya A."/>
            <person name="Carninci P."/>
            <person name="Kawai J."/>
            <person name="Hayashizaki Y."/>
            <person name="Shinozaki K."/>
        </authorList>
    </citation>
    <scope>NUCLEOTIDE SEQUENCE [LARGE SCALE MRNA] (ISOFORM 2)</scope>
    <source>
        <strain>cv. Columbia</strain>
    </source>
</reference>
<reference key="4">
    <citation type="journal article" date="2008" name="Plant Cell">
        <title>The plant TPX2 protein regulates prospindle assembly before nuclear envelope breakdown.</title>
        <authorList>
            <person name="Vos J.W."/>
            <person name="Pieuchot L."/>
            <person name="Evrard J.L."/>
            <person name="Janski N."/>
            <person name="Bergdoll M."/>
            <person name="de Ronde D."/>
            <person name="Perez L.H."/>
            <person name="Sardon T."/>
            <person name="Vernos I."/>
            <person name="Schmit A.C."/>
        </authorList>
    </citation>
    <scope>FUNCTION</scope>
    <scope>3D-STRUCTURE MODELING</scope>
    <scope>SUBCELLULAR LOCATION</scope>
    <scope>MUTAGENESIS OF 231-LYS-ARG-232; LEU-500; LEU-506; 673-LYS-ARG-674 AND 733-LYS-ARG-734</scope>
    <scope>DOMAIN</scope>
    <scope>DISRUPTION PHENOTYPE</scope>
</reference>
<reference key="5">
    <citation type="journal article" date="2012" name="New Phytol.">
        <title>Plant Aurora kinases play a role in maintenance of primary meristems and control of endoreduplication.</title>
        <authorList>
            <person name="Petrovska B."/>
            <person name="Cenklova V."/>
            <person name="Pochylova Z."/>
            <person name="Kourova H."/>
            <person name="Doskocilova A."/>
            <person name="Plihal O."/>
            <person name="Binarova L."/>
            <person name="Binarova P."/>
        </authorList>
    </citation>
    <scope>SUBCELLULAR LOCATION</scope>
    <scope>INTERACTION WITH AUR1</scope>
</reference>
<reference key="6">
    <citation type="journal article" date="2013" name="J. Exp. Bot.">
        <title>Overexpressed TPX2 causes ectopic formation of microtubular arrays in the nuclei of acentrosomal plant cells.</title>
        <authorList>
            <person name="Petrovska B."/>
            <person name="Jerabkova H."/>
            <person name="Kohoutova L."/>
            <person name="Cenklova V."/>
            <person name="Pochylova Z."/>
            <person name="Gelova Z."/>
            <person name="Kocarova G."/>
            <person name="Vachova L."/>
            <person name="Kurejova M."/>
            <person name="Tomastikova E."/>
            <person name="Binarova P."/>
        </authorList>
    </citation>
    <scope>FUNCTION</scope>
</reference>
<comment type="function">
    <text evidence="3 5">Regulates prospindle assembly during late prophase and at the onset of mitosis, before nuclear envelope breakdown (NEB). Is exported from the nucleus shortly before NEB and organized into two polar crescents. After NEB, is progressively associated with the forming spindle. Probably mediates AUR1 activation and localization to spindle microtubules. Has a microtubule binding capability and is able to trigger microtubule assembly induced by RanGTP in a heterologous system. Not involved in phragmoplast assembly, nuclear envelope reformation, and cortical microtubule assembly at the onset of G1 (PubMed:18941054). Involved in the formation of specific nuclear and perinuclear microtubular arrays in the nuclei of acentrosomal plant cells. Fungi and plants have acentrosomal microtubule arrays because they lack centrosomes. They use other microtubule organizing center (MTOC) structures to organize their microtubules. May function through interaction with importin (PubMed:24006426).</text>
</comment>
<comment type="subunit">
    <text evidence="4">Interacts with AUR1.</text>
</comment>
<comment type="subcellular location">
    <subcellularLocation>
        <location>Nucleus</location>
        <location>Nucleoplasm</location>
    </subcellularLocation>
    <subcellularLocation>
        <location>Cytoplasm</location>
        <location>Cytoskeleton</location>
        <location>Spindle</location>
    </subcellularLocation>
    <subcellularLocation>
        <location>Cytoplasm</location>
        <location>Cytoskeleton</location>
        <location>Phragmoplast</location>
    </subcellularLocation>
    <text>Located in the nucleoplasm during interphase until late G2, in the perinuclear region during early prophase, and at the spindle during mitosis. Localized on a specific subset of phragmoplast microtubules in early telophase.</text>
</comment>
<comment type="alternative products">
    <event type="alternative splicing"/>
    <isoform>
        <id>F4I2H7-1</id>
        <name>1</name>
        <sequence type="displayed"/>
    </isoform>
    <isoform>
        <id>F4I2H7-2</id>
        <name>2</name>
        <sequence type="described" ref="VSP_044615 VSP_044616"/>
    </isoform>
    <isoform>
        <id>F4I2H7-3</id>
        <name>3</name>
        <sequence type="described" ref="VSP_044609 VSP_044610 VSP_044611 VSP_044612 VSP_044613 VSP_044614"/>
    </isoform>
</comment>
<comment type="domain">
    <text evidence="3">The N-terminal part of the protein is required for the interaction with AUR1. Two regions (220-463 and 684-758) seem involved in the targeting to the microtubule cytoskeleton.</text>
</comment>
<comment type="disruption phenotype">
    <text evidence="3">Lethal when homozygous.</text>
</comment>
<comment type="miscellaneous">
    <text evidence="5">TPX2 over-expressing cells display formation of nuclear and perinuclear microtubular arrays which are not specific for the transition to mitosis and occur independently of AUR1 kinase.</text>
</comment>
<comment type="similarity">
    <text evidence="7">Belongs to the TPX2 family.</text>
</comment>
<comment type="sequence caution" evidence="7">
    <conflict type="erroneous gene model prediction">
        <sequence resource="EMBL-CDS" id="AAD10690"/>
    </conflict>
</comment>